<proteinExistence type="inferred from homology"/>
<keyword id="KW-0963">Cytoplasm</keyword>
<keyword id="KW-0227">DNA damage</keyword>
<keyword id="KW-0233">DNA recombination</keyword>
<keyword id="KW-0234">DNA repair</keyword>
<keyword id="KW-0238">DNA-binding</keyword>
<keyword id="KW-0255">Endonuclease</keyword>
<keyword id="KW-0378">Hydrolase</keyword>
<keyword id="KW-0460">Magnesium</keyword>
<keyword id="KW-0479">Metal-binding</keyword>
<keyword id="KW-0540">Nuclease</keyword>
<keyword id="KW-1185">Reference proteome</keyword>
<protein>
    <recommendedName>
        <fullName evidence="1">Crossover junction endodeoxyribonuclease RuvC</fullName>
        <ecNumber evidence="1">3.1.21.10</ecNumber>
    </recommendedName>
    <alternativeName>
        <fullName evidence="1">Holliday junction nuclease RuvC</fullName>
    </alternativeName>
    <alternativeName>
        <fullName evidence="1">Holliday junction resolvase RuvC</fullName>
    </alternativeName>
</protein>
<organism>
    <name type="scientific">Shewanella woodyi (strain ATCC 51908 / MS32)</name>
    <dbReference type="NCBI Taxonomy" id="392500"/>
    <lineage>
        <taxon>Bacteria</taxon>
        <taxon>Pseudomonadati</taxon>
        <taxon>Pseudomonadota</taxon>
        <taxon>Gammaproteobacteria</taxon>
        <taxon>Alteromonadales</taxon>
        <taxon>Shewanellaceae</taxon>
        <taxon>Shewanella</taxon>
    </lineage>
</organism>
<sequence>MAIILGIDPGSRITGYGVIQCNGRSQIYLGSGCIRTASDDFPYRLKQIFDGVSEIIRQYQPNFFAIERVFLAKNADSALKLGQARGAAIVAATNADLPVAEYSATQIKSAVVGTGKAEKTQVQHMVQQILKLPAAPQADAADALGVAICHFHTSQSLVSLGGRANTRTYGRYR</sequence>
<evidence type="ECO:0000255" key="1">
    <source>
        <dbReference type="HAMAP-Rule" id="MF_00034"/>
    </source>
</evidence>
<accession>B1KHG5</accession>
<name>RUVC_SHEWM</name>
<feature type="chain" id="PRO_1000090563" description="Crossover junction endodeoxyribonuclease RuvC">
    <location>
        <begin position="1"/>
        <end position="173"/>
    </location>
</feature>
<feature type="active site" evidence="1">
    <location>
        <position position="8"/>
    </location>
</feature>
<feature type="active site" evidence="1">
    <location>
        <position position="67"/>
    </location>
</feature>
<feature type="active site" evidence="1">
    <location>
        <position position="139"/>
    </location>
</feature>
<feature type="binding site" evidence="1">
    <location>
        <position position="8"/>
    </location>
    <ligand>
        <name>Mg(2+)</name>
        <dbReference type="ChEBI" id="CHEBI:18420"/>
        <label>1</label>
    </ligand>
</feature>
<feature type="binding site" evidence="1">
    <location>
        <position position="67"/>
    </location>
    <ligand>
        <name>Mg(2+)</name>
        <dbReference type="ChEBI" id="CHEBI:18420"/>
        <label>2</label>
    </ligand>
</feature>
<feature type="binding site" evidence="1">
    <location>
        <position position="139"/>
    </location>
    <ligand>
        <name>Mg(2+)</name>
        <dbReference type="ChEBI" id="CHEBI:18420"/>
        <label>1</label>
    </ligand>
</feature>
<dbReference type="EC" id="3.1.21.10" evidence="1"/>
<dbReference type="EMBL" id="CP000961">
    <property type="protein sequence ID" value="ACA86850.1"/>
    <property type="molecule type" value="Genomic_DNA"/>
</dbReference>
<dbReference type="RefSeq" id="WP_012325190.1">
    <property type="nucleotide sequence ID" value="NC_010506.1"/>
</dbReference>
<dbReference type="SMR" id="B1KHG5"/>
<dbReference type="STRING" id="392500.Swoo_2573"/>
<dbReference type="KEGG" id="swd:Swoo_2573"/>
<dbReference type="eggNOG" id="COG0817">
    <property type="taxonomic scope" value="Bacteria"/>
</dbReference>
<dbReference type="HOGENOM" id="CLU_091257_2_1_6"/>
<dbReference type="Proteomes" id="UP000002168">
    <property type="component" value="Chromosome"/>
</dbReference>
<dbReference type="GO" id="GO:0005737">
    <property type="term" value="C:cytoplasm"/>
    <property type="evidence" value="ECO:0007669"/>
    <property type="project" value="UniProtKB-SubCell"/>
</dbReference>
<dbReference type="GO" id="GO:0048476">
    <property type="term" value="C:Holliday junction resolvase complex"/>
    <property type="evidence" value="ECO:0007669"/>
    <property type="project" value="UniProtKB-UniRule"/>
</dbReference>
<dbReference type="GO" id="GO:0008821">
    <property type="term" value="F:crossover junction DNA endonuclease activity"/>
    <property type="evidence" value="ECO:0007669"/>
    <property type="project" value="UniProtKB-UniRule"/>
</dbReference>
<dbReference type="GO" id="GO:0003677">
    <property type="term" value="F:DNA binding"/>
    <property type="evidence" value="ECO:0007669"/>
    <property type="project" value="UniProtKB-KW"/>
</dbReference>
<dbReference type="GO" id="GO:0000287">
    <property type="term" value="F:magnesium ion binding"/>
    <property type="evidence" value="ECO:0007669"/>
    <property type="project" value="UniProtKB-UniRule"/>
</dbReference>
<dbReference type="GO" id="GO:0006310">
    <property type="term" value="P:DNA recombination"/>
    <property type="evidence" value="ECO:0007669"/>
    <property type="project" value="UniProtKB-UniRule"/>
</dbReference>
<dbReference type="GO" id="GO:0006281">
    <property type="term" value="P:DNA repair"/>
    <property type="evidence" value="ECO:0007669"/>
    <property type="project" value="UniProtKB-UniRule"/>
</dbReference>
<dbReference type="CDD" id="cd16962">
    <property type="entry name" value="RuvC"/>
    <property type="match status" value="1"/>
</dbReference>
<dbReference type="FunFam" id="3.30.420.10:FF:000002">
    <property type="entry name" value="Crossover junction endodeoxyribonuclease RuvC"/>
    <property type="match status" value="1"/>
</dbReference>
<dbReference type="Gene3D" id="3.30.420.10">
    <property type="entry name" value="Ribonuclease H-like superfamily/Ribonuclease H"/>
    <property type="match status" value="1"/>
</dbReference>
<dbReference type="HAMAP" id="MF_00034">
    <property type="entry name" value="RuvC"/>
    <property type="match status" value="1"/>
</dbReference>
<dbReference type="InterPro" id="IPR012337">
    <property type="entry name" value="RNaseH-like_sf"/>
</dbReference>
<dbReference type="InterPro" id="IPR036397">
    <property type="entry name" value="RNaseH_sf"/>
</dbReference>
<dbReference type="InterPro" id="IPR020563">
    <property type="entry name" value="X-over_junc_endoDNase_Mg_BS"/>
</dbReference>
<dbReference type="InterPro" id="IPR002176">
    <property type="entry name" value="X-over_junc_endoDNase_RuvC"/>
</dbReference>
<dbReference type="NCBIfam" id="NF000711">
    <property type="entry name" value="PRK00039.2-1"/>
    <property type="match status" value="1"/>
</dbReference>
<dbReference type="NCBIfam" id="TIGR00228">
    <property type="entry name" value="ruvC"/>
    <property type="match status" value="1"/>
</dbReference>
<dbReference type="PANTHER" id="PTHR30194">
    <property type="entry name" value="CROSSOVER JUNCTION ENDODEOXYRIBONUCLEASE RUVC"/>
    <property type="match status" value="1"/>
</dbReference>
<dbReference type="PANTHER" id="PTHR30194:SF3">
    <property type="entry name" value="CROSSOVER JUNCTION ENDODEOXYRIBONUCLEASE RUVC"/>
    <property type="match status" value="1"/>
</dbReference>
<dbReference type="Pfam" id="PF02075">
    <property type="entry name" value="RuvC"/>
    <property type="match status" value="1"/>
</dbReference>
<dbReference type="PRINTS" id="PR00696">
    <property type="entry name" value="RSOLVASERUVC"/>
</dbReference>
<dbReference type="SUPFAM" id="SSF53098">
    <property type="entry name" value="Ribonuclease H-like"/>
    <property type="match status" value="1"/>
</dbReference>
<dbReference type="PROSITE" id="PS01321">
    <property type="entry name" value="RUVC"/>
    <property type="match status" value="1"/>
</dbReference>
<gene>
    <name evidence="1" type="primary">ruvC</name>
    <name type="ordered locus">Swoo_2573</name>
</gene>
<comment type="function">
    <text evidence="1">The RuvA-RuvB-RuvC complex processes Holliday junction (HJ) DNA during genetic recombination and DNA repair. Endonuclease that resolves HJ intermediates. Cleaves cruciform DNA by making single-stranded nicks across the HJ at symmetrical positions within the homologous arms, yielding a 5'-phosphate and a 3'-hydroxyl group; requires a central core of homology in the junction. The consensus cleavage sequence is 5'-(A/T)TT(C/G)-3'. Cleavage occurs on the 3'-side of the TT dinucleotide at the point of strand exchange. HJ branch migration catalyzed by RuvA-RuvB allows RuvC to scan DNA until it finds its consensus sequence, where it cleaves and resolves the cruciform DNA.</text>
</comment>
<comment type="catalytic activity">
    <reaction evidence="1">
        <text>Endonucleolytic cleavage at a junction such as a reciprocal single-stranded crossover between two homologous DNA duplexes (Holliday junction).</text>
        <dbReference type="EC" id="3.1.21.10"/>
    </reaction>
</comment>
<comment type="cofactor">
    <cofactor evidence="1">
        <name>Mg(2+)</name>
        <dbReference type="ChEBI" id="CHEBI:18420"/>
    </cofactor>
    <text evidence="1">Binds 2 Mg(2+) ion per subunit.</text>
</comment>
<comment type="subunit">
    <text evidence="1">Homodimer which binds Holliday junction (HJ) DNA. The HJ becomes 2-fold symmetrical on binding to RuvC with unstacked arms; it has a different conformation from HJ DNA in complex with RuvA. In the full resolvosome a probable DNA-RuvA(4)-RuvB(12)-RuvC(2) complex forms which resolves the HJ.</text>
</comment>
<comment type="subcellular location">
    <subcellularLocation>
        <location evidence="1">Cytoplasm</location>
    </subcellularLocation>
</comment>
<comment type="similarity">
    <text evidence="1">Belongs to the RuvC family.</text>
</comment>
<reference key="1">
    <citation type="submission" date="2008-02" db="EMBL/GenBank/DDBJ databases">
        <title>Complete sequence of Shewanella woodyi ATCC 51908.</title>
        <authorList>
            <consortium name="US DOE Joint Genome Institute"/>
            <person name="Copeland A."/>
            <person name="Lucas S."/>
            <person name="Lapidus A."/>
            <person name="Glavina del Rio T."/>
            <person name="Dalin E."/>
            <person name="Tice H."/>
            <person name="Bruce D."/>
            <person name="Goodwin L."/>
            <person name="Pitluck S."/>
            <person name="Sims D."/>
            <person name="Brettin T."/>
            <person name="Detter J.C."/>
            <person name="Han C."/>
            <person name="Kuske C.R."/>
            <person name="Schmutz J."/>
            <person name="Larimer F."/>
            <person name="Land M."/>
            <person name="Hauser L."/>
            <person name="Kyrpides N."/>
            <person name="Lykidis A."/>
            <person name="Zhao J.-S."/>
            <person name="Richardson P."/>
        </authorList>
    </citation>
    <scope>NUCLEOTIDE SEQUENCE [LARGE SCALE GENOMIC DNA]</scope>
    <source>
        <strain>ATCC 51908 / MS32</strain>
    </source>
</reference>